<evidence type="ECO:0000255" key="1">
    <source>
        <dbReference type="HAMAP-Rule" id="MF_01201"/>
    </source>
</evidence>
<reference key="1">
    <citation type="journal article" date="2004" name="J. Bacteriol.">
        <title>Complete genome sequence of Rickettsia typhi and comparison with sequences of other Rickettsiae.</title>
        <authorList>
            <person name="McLeod M.P."/>
            <person name="Qin X."/>
            <person name="Karpathy S.E."/>
            <person name="Gioia J."/>
            <person name="Highlander S.K."/>
            <person name="Fox G.E."/>
            <person name="McNeill T.Z."/>
            <person name="Jiang H."/>
            <person name="Muzny D."/>
            <person name="Jacob L.S."/>
            <person name="Hawes A.C."/>
            <person name="Sodergren E."/>
            <person name="Gill R."/>
            <person name="Hume J."/>
            <person name="Morgan M."/>
            <person name="Fan G."/>
            <person name="Amin A.G."/>
            <person name="Gibbs R.A."/>
            <person name="Hong C."/>
            <person name="Yu X.-J."/>
            <person name="Walker D.H."/>
            <person name="Weinstock G.M."/>
        </authorList>
    </citation>
    <scope>NUCLEOTIDE SEQUENCE [LARGE SCALE GENOMIC DNA]</scope>
    <source>
        <strain>ATCC VR-144 / Wilmington</strain>
    </source>
</reference>
<protein>
    <recommendedName>
        <fullName evidence="1">Alanine racemase</fullName>
        <ecNumber evidence="1">5.1.1.1</ecNumber>
    </recommendedName>
</protein>
<comment type="function">
    <text evidence="1">Catalyzes the interconversion of L-alanine and D-alanine. May also act on other amino acids.</text>
</comment>
<comment type="catalytic activity">
    <reaction evidence="1">
        <text>L-alanine = D-alanine</text>
        <dbReference type="Rhea" id="RHEA:20249"/>
        <dbReference type="ChEBI" id="CHEBI:57416"/>
        <dbReference type="ChEBI" id="CHEBI:57972"/>
        <dbReference type="EC" id="5.1.1.1"/>
    </reaction>
</comment>
<comment type="cofactor">
    <cofactor evidence="1">
        <name>pyridoxal 5'-phosphate</name>
        <dbReference type="ChEBI" id="CHEBI:597326"/>
    </cofactor>
</comment>
<comment type="pathway">
    <text evidence="1">Amino-acid biosynthesis; D-alanine biosynthesis; D-alanine from L-alanine: step 1/1.</text>
</comment>
<comment type="similarity">
    <text evidence="1">Belongs to the alanine racemase family.</text>
</comment>
<feature type="chain" id="PRO_0000272406" description="Alanine racemase">
    <location>
        <begin position="1"/>
        <end position="402"/>
    </location>
</feature>
<feature type="domain" description="RPE1 insert">
    <location>
        <begin position="226"/>
        <end position="271"/>
    </location>
</feature>
<feature type="active site" description="Proton acceptor; specific for D-alanine" evidence="1">
    <location>
        <position position="34"/>
    </location>
</feature>
<feature type="active site" description="Proton acceptor; specific for L-alanine" evidence="1">
    <location>
        <position position="296"/>
    </location>
</feature>
<feature type="binding site" evidence="1">
    <location>
        <position position="133"/>
    </location>
    <ligand>
        <name>substrate</name>
    </ligand>
</feature>
<feature type="binding site" evidence="1">
    <location>
        <position position="344"/>
    </location>
    <ligand>
        <name>substrate</name>
    </ligand>
</feature>
<feature type="modified residue" description="N6-(pyridoxal phosphate)lysine" evidence="1">
    <location>
        <position position="34"/>
    </location>
</feature>
<sequence length="402" mass="45046">MSLCTLEINLSAIKNNYRLLQDICTTALVGAAVKANGYGIGAMQIAKALIEENCQYFFVATSEEGINLRKALNNDITILVLNGVFTHDALELIQYNLTPVLNNLKQIEIWQKFSNLKEKILPCYLHFNTGLNRFGLNYDEIEQLINDRDLLKGLDLQYIISHLAASEEMDNPYNLAQLNRFKDYLEYFPNVKASLANSGGIFLGQDYHFDLARPGAALYGLNSLIEVSYNLSYKEKFERNTPALATTVCINKCADVNTRLTYKVPLKGSYRLQNPVTLKAPIIHLQNLTLDSHIGYNMTFTTKRDSIIATLPLGYADGFSRNFSNQGEVFINSRSVPIVGRVSMDLINIDVTDLPPSEVFLGQEVEIIGNYCTPDKIASIIGTVGYEVLTSLGSRYKRKYIS</sequence>
<gene>
    <name type="primary">alr</name>
    <name type="ordered locus">RT0042</name>
</gene>
<dbReference type="EC" id="5.1.1.1" evidence="1"/>
<dbReference type="EMBL" id="AE017197">
    <property type="protein sequence ID" value="AAU03529.1"/>
    <property type="molecule type" value="Genomic_DNA"/>
</dbReference>
<dbReference type="RefSeq" id="WP_011190516.1">
    <property type="nucleotide sequence ID" value="NC_006142.1"/>
</dbReference>
<dbReference type="SMR" id="Q68XW3"/>
<dbReference type="KEGG" id="rty:RT0042"/>
<dbReference type="eggNOG" id="COG0787">
    <property type="taxonomic scope" value="Bacteria"/>
</dbReference>
<dbReference type="HOGENOM" id="CLU_028393_1_1_5"/>
<dbReference type="OrthoDB" id="9813814at2"/>
<dbReference type="UniPathway" id="UPA00042">
    <property type="reaction ID" value="UER00497"/>
</dbReference>
<dbReference type="Proteomes" id="UP000000604">
    <property type="component" value="Chromosome"/>
</dbReference>
<dbReference type="GO" id="GO:0005829">
    <property type="term" value="C:cytosol"/>
    <property type="evidence" value="ECO:0007669"/>
    <property type="project" value="TreeGrafter"/>
</dbReference>
<dbReference type="GO" id="GO:0008784">
    <property type="term" value="F:alanine racemase activity"/>
    <property type="evidence" value="ECO:0007669"/>
    <property type="project" value="UniProtKB-UniRule"/>
</dbReference>
<dbReference type="GO" id="GO:0030170">
    <property type="term" value="F:pyridoxal phosphate binding"/>
    <property type="evidence" value="ECO:0007669"/>
    <property type="project" value="UniProtKB-UniRule"/>
</dbReference>
<dbReference type="GO" id="GO:0030632">
    <property type="term" value="P:D-alanine biosynthetic process"/>
    <property type="evidence" value="ECO:0007669"/>
    <property type="project" value="UniProtKB-UniRule"/>
</dbReference>
<dbReference type="CDD" id="cd00430">
    <property type="entry name" value="PLPDE_III_AR"/>
    <property type="match status" value="1"/>
</dbReference>
<dbReference type="Gene3D" id="3.20.20.10">
    <property type="entry name" value="Alanine racemase"/>
    <property type="match status" value="1"/>
</dbReference>
<dbReference type="Gene3D" id="2.40.37.10">
    <property type="entry name" value="Lyase, Ornithine Decarboxylase, Chain A, domain 1"/>
    <property type="match status" value="1"/>
</dbReference>
<dbReference type="HAMAP" id="MF_01201">
    <property type="entry name" value="Ala_racemase"/>
    <property type="match status" value="1"/>
</dbReference>
<dbReference type="InterPro" id="IPR000821">
    <property type="entry name" value="Ala_racemase"/>
</dbReference>
<dbReference type="InterPro" id="IPR009006">
    <property type="entry name" value="Ala_racemase/Decarboxylase_C"/>
</dbReference>
<dbReference type="InterPro" id="IPR011079">
    <property type="entry name" value="Ala_racemase_C"/>
</dbReference>
<dbReference type="InterPro" id="IPR001608">
    <property type="entry name" value="Ala_racemase_N"/>
</dbReference>
<dbReference type="InterPro" id="IPR020622">
    <property type="entry name" value="Ala_racemase_pyridoxalP-BS"/>
</dbReference>
<dbReference type="InterPro" id="IPR029066">
    <property type="entry name" value="PLP-binding_barrel"/>
</dbReference>
<dbReference type="InterPro" id="IPR005728">
    <property type="entry name" value="RPE1"/>
</dbReference>
<dbReference type="NCBIfam" id="NF000792">
    <property type="entry name" value="PRK00053.2-3"/>
    <property type="match status" value="1"/>
</dbReference>
<dbReference type="NCBIfam" id="TIGR01045">
    <property type="entry name" value="RPE1"/>
    <property type="match status" value="1"/>
</dbReference>
<dbReference type="PANTHER" id="PTHR30511">
    <property type="entry name" value="ALANINE RACEMASE"/>
    <property type="match status" value="1"/>
</dbReference>
<dbReference type="PANTHER" id="PTHR30511:SF0">
    <property type="entry name" value="ALANINE RACEMASE, CATABOLIC-RELATED"/>
    <property type="match status" value="1"/>
</dbReference>
<dbReference type="Pfam" id="PF00842">
    <property type="entry name" value="Ala_racemase_C"/>
    <property type="match status" value="1"/>
</dbReference>
<dbReference type="Pfam" id="PF01168">
    <property type="entry name" value="Ala_racemase_N"/>
    <property type="match status" value="1"/>
</dbReference>
<dbReference type="PRINTS" id="PR00992">
    <property type="entry name" value="ALARACEMASE"/>
</dbReference>
<dbReference type="SMART" id="SM01005">
    <property type="entry name" value="Ala_racemase_C"/>
    <property type="match status" value="1"/>
</dbReference>
<dbReference type="SUPFAM" id="SSF50621">
    <property type="entry name" value="Alanine racemase C-terminal domain-like"/>
    <property type="match status" value="1"/>
</dbReference>
<dbReference type="SUPFAM" id="SSF51419">
    <property type="entry name" value="PLP-binding barrel"/>
    <property type="match status" value="1"/>
</dbReference>
<dbReference type="PROSITE" id="PS00395">
    <property type="entry name" value="ALANINE_RACEMASE"/>
    <property type="match status" value="1"/>
</dbReference>
<proteinExistence type="inferred from homology"/>
<organism>
    <name type="scientific">Rickettsia typhi (strain ATCC VR-144 / Wilmington)</name>
    <dbReference type="NCBI Taxonomy" id="257363"/>
    <lineage>
        <taxon>Bacteria</taxon>
        <taxon>Pseudomonadati</taxon>
        <taxon>Pseudomonadota</taxon>
        <taxon>Alphaproteobacteria</taxon>
        <taxon>Rickettsiales</taxon>
        <taxon>Rickettsiaceae</taxon>
        <taxon>Rickettsieae</taxon>
        <taxon>Rickettsia</taxon>
        <taxon>typhus group</taxon>
    </lineage>
</organism>
<keyword id="KW-0413">Isomerase</keyword>
<keyword id="KW-0663">Pyridoxal phosphate</keyword>
<accession>Q68XW3</accession>
<name>ALR_RICTY</name>